<dbReference type="EC" id="3.6.4.-" evidence="1"/>
<dbReference type="EMBL" id="CP001581">
    <property type="protein sequence ID" value="ACO83804.1"/>
    <property type="molecule type" value="Genomic_DNA"/>
</dbReference>
<dbReference type="RefSeq" id="WP_003357950.1">
    <property type="nucleotide sequence ID" value="NC_012563.1"/>
</dbReference>
<dbReference type="SMR" id="C1FKG1"/>
<dbReference type="KEGG" id="cby:CLM_3475"/>
<dbReference type="eggNOG" id="COG2255">
    <property type="taxonomic scope" value="Bacteria"/>
</dbReference>
<dbReference type="HOGENOM" id="CLU_055599_1_0_9"/>
<dbReference type="Proteomes" id="UP000001374">
    <property type="component" value="Chromosome"/>
</dbReference>
<dbReference type="GO" id="GO:0005737">
    <property type="term" value="C:cytoplasm"/>
    <property type="evidence" value="ECO:0007669"/>
    <property type="project" value="UniProtKB-SubCell"/>
</dbReference>
<dbReference type="GO" id="GO:0048476">
    <property type="term" value="C:Holliday junction resolvase complex"/>
    <property type="evidence" value="ECO:0007669"/>
    <property type="project" value="UniProtKB-UniRule"/>
</dbReference>
<dbReference type="GO" id="GO:0005524">
    <property type="term" value="F:ATP binding"/>
    <property type="evidence" value="ECO:0007669"/>
    <property type="project" value="UniProtKB-UniRule"/>
</dbReference>
<dbReference type="GO" id="GO:0016887">
    <property type="term" value="F:ATP hydrolysis activity"/>
    <property type="evidence" value="ECO:0007669"/>
    <property type="project" value="InterPro"/>
</dbReference>
<dbReference type="GO" id="GO:0000400">
    <property type="term" value="F:four-way junction DNA binding"/>
    <property type="evidence" value="ECO:0007669"/>
    <property type="project" value="UniProtKB-UniRule"/>
</dbReference>
<dbReference type="GO" id="GO:0009378">
    <property type="term" value="F:four-way junction helicase activity"/>
    <property type="evidence" value="ECO:0007669"/>
    <property type="project" value="InterPro"/>
</dbReference>
<dbReference type="GO" id="GO:0006310">
    <property type="term" value="P:DNA recombination"/>
    <property type="evidence" value="ECO:0007669"/>
    <property type="project" value="UniProtKB-UniRule"/>
</dbReference>
<dbReference type="GO" id="GO:0006281">
    <property type="term" value="P:DNA repair"/>
    <property type="evidence" value="ECO:0007669"/>
    <property type="project" value="UniProtKB-UniRule"/>
</dbReference>
<dbReference type="CDD" id="cd00009">
    <property type="entry name" value="AAA"/>
    <property type="match status" value="1"/>
</dbReference>
<dbReference type="Gene3D" id="1.10.8.60">
    <property type="match status" value="1"/>
</dbReference>
<dbReference type="Gene3D" id="3.40.50.300">
    <property type="entry name" value="P-loop containing nucleotide triphosphate hydrolases"/>
    <property type="match status" value="1"/>
</dbReference>
<dbReference type="Gene3D" id="1.10.10.10">
    <property type="entry name" value="Winged helix-like DNA-binding domain superfamily/Winged helix DNA-binding domain"/>
    <property type="match status" value="1"/>
</dbReference>
<dbReference type="HAMAP" id="MF_00016">
    <property type="entry name" value="DNA_HJ_migration_RuvB"/>
    <property type="match status" value="1"/>
</dbReference>
<dbReference type="InterPro" id="IPR003593">
    <property type="entry name" value="AAA+_ATPase"/>
</dbReference>
<dbReference type="InterPro" id="IPR041445">
    <property type="entry name" value="AAA_lid_4"/>
</dbReference>
<dbReference type="InterPro" id="IPR004605">
    <property type="entry name" value="DNA_helicase_Holl-junc_RuvB"/>
</dbReference>
<dbReference type="InterPro" id="IPR027417">
    <property type="entry name" value="P-loop_NTPase"/>
</dbReference>
<dbReference type="InterPro" id="IPR008824">
    <property type="entry name" value="RuvB-like_N"/>
</dbReference>
<dbReference type="InterPro" id="IPR008823">
    <property type="entry name" value="RuvB_C"/>
</dbReference>
<dbReference type="InterPro" id="IPR036388">
    <property type="entry name" value="WH-like_DNA-bd_sf"/>
</dbReference>
<dbReference type="InterPro" id="IPR036390">
    <property type="entry name" value="WH_DNA-bd_sf"/>
</dbReference>
<dbReference type="NCBIfam" id="NF000868">
    <property type="entry name" value="PRK00080.1"/>
    <property type="match status" value="1"/>
</dbReference>
<dbReference type="NCBIfam" id="TIGR00635">
    <property type="entry name" value="ruvB"/>
    <property type="match status" value="1"/>
</dbReference>
<dbReference type="PANTHER" id="PTHR42848">
    <property type="match status" value="1"/>
</dbReference>
<dbReference type="PANTHER" id="PTHR42848:SF1">
    <property type="entry name" value="HOLLIDAY JUNCTION BRANCH MIGRATION COMPLEX SUBUNIT RUVB"/>
    <property type="match status" value="1"/>
</dbReference>
<dbReference type="Pfam" id="PF17864">
    <property type="entry name" value="AAA_lid_4"/>
    <property type="match status" value="1"/>
</dbReference>
<dbReference type="Pfam" id="PF05491">
    <property type="entry name" value="RuvB_C"/>
    <property type="match status" value="1"/>
</dbReference>
<dbReference type="Pfam" id="PF05496">
    <property type="entry name" value="RuvB_N"/>
    <property type="match status" value="1"/>
</dbReference>
<dbReference type="SMART" id="SM00382">
    <property type="entry name" value="AAA"/>
    <property type="match status" value="1"/>
</dbReference>
<dbReference type="SUPFAM" id="SSF52540">
    <property type="entry name" value="P-loop containing nucleoside triphosphate hydrolases"/>
    <property type="match status" value="1"/>
</dbReference>
<dbReference type="SUPFAM" id="SSF46785">
    <property type="entry name" value="Winged helix' DNA-binding domain"/>
    <property type="match status" value="1"/>
</dbReference>
<reference key="1">
    <citation type="submission" date="2008-10" db="EMBL/GenBank/DDBJ databases">
        <title>Genome sequence of Clostridium botulinum A2 Kyoto.</title>
        <authorList>
            <person name="Shrivastava S."/>
            <person name="Brinkac L.M."/>
            <person name="Brown J.L."/>
            <person name="Bruce D."/>
            <person name="Detter C.C."/>
            <person name="Johnson E.A."/>
            <person name="Munk C.A."/>
            <person name="Smith L.A."/>
            <person name="Smith T.J."/>
            <person name="Sutton G."/>
            <person name="Brettin T.S."/>
        </authorList>
    </citation>
    <scope>NUCLEOTIDE SEQUENCE [LARGE SCALE GENOMIC DNA]</scope>
    <source>
        <strain>Kyoto / Type A2</strain>
    </source>
</reference>
<gene>
    <name evidence="1" type="primary">ruvB</name>
    <name type="ordered locus">CLM_3475</name>
</gene>
<accession>C1FKG1</accession>
<organism>
    <name type="scientific">Clostridium botulinum (strain Kyoto / Type A2)</name>
    <dbReference type="NCBI Taxonomy" id="536232"/>
    <lineage>
        <taxon>Bacteria</taxon>
        <taxon>Bacillati</taxon>
        <taxon>Bacillota</taxon>
        <taxon>Clostridia</taxon>
        <taxon>Eubacteriales</taxon>
        <taxon>Clostridiaceae</taxon>
        <taxon>Clostridium</taxon>
    </lineage>
</organism>
<feature type="chain" id="PRO_1000195212" description="Holliday junction branch migration complex subunit RuvB">
    <location>
        <begin position="1"/>
        <end position="342"/>
    </location>
</feature>
<feature type="region of interest" description="Large ATPase domain (RuvB-L)" evidence="1">
    <location>
        <begin position="1"/>
        <end position="181"/>
    </location>
</feature>
<feature type="region of interest" description="Small ATPAse domain (RuvB-S)" evidence="1">
    <location>
        <begin position="182"/>
        <end position="252"/>
    </location>
</feature>
<feature type="region of interest" description="Head domain (RuvB-H)" evidence="1">
    <location>
        <begin position="255"/>
        <end position="342"/>
    </location>
</feature>
<feature type="binding site" evidence="1">
    <location>
        <position position="20"/>
    </location>
    <ligand>
        <name>ATP</name>
        <dbReference type="ChEBI" id="CHEBI:30616"/>
    </ligand>
</feature>
<feature type="binding site" evidence="1">
    <location>
        <position position="21"/>
    </location>
    <ligand>
        <name>ATP</name>
        <dbReference type="ChEBI" id="CHEBI:30616"/>
    </ligand>
</feature>
<feature type="binding site" evidence="1">
    <location>
        <position position="62"/>
    </location>
    <ligand>
        <name>ATP</name>
        <dbReference type="ChEBI" id="CHEBI:30616"/>
    </ligand>
</feature>
<feature type="binding site" evidence="1">
    <location>
        <position position="65"/>
    </location>
    <ligand>
        <name>ATP</name>
        <dbReference type="ChEBI" id="CHEBI:30616"/>
    </ligand>
</feature>
<feature type="binding site" evidence="1">
    <location>
        <position position="66"/>
    </location>
    <ligand>
        <name>ATP</name>
        <dbReference type="ChEBI" id="CHEBI:30616"/>
    </ligand>
</feature>
<feature type="binding site" evidence="1">
    <location>
        <position position="66"/>
    </location>
    <ligand>
        <name>Mg(2+)</name>
        <dbReference type="ChEBI" id="CHEBI:18420"/>
    </ligand>
</feature>
<feature type="binding site" evidence="1">
    <location>
        <position position="67"/>
    </location>
    <ligand>
        <name>ATP</name>
        <dbReference type="ChEBI" id="CHEBI:30616"/>
    </ligand>
</feature>
<feature type="binding site" evidence="1">
    <location>
        <begin position="128"/>
        <end position="130"/>
    </location>
    <ligand>
        <name>ATP</name>
        <dbReference type="ChEBI" id="CHEBI:30616"/>
    </ligand>
</feature>
<feature type="binding site" evidence="1">
    <location>
        <position position="171"/>
    </location>
    <ligand>
        <name>ATP</name>
        <dbReference type="ChEBI" id="CHEBI:30616"/>
    </ligand>
</feature>
<feature type="binding site" evidence="1">
    <location>
        <position position="181"/>
    </location>
    <ligand>
        <name>ATP</name>
        <dbReference type="ChEBI" id="CHEBI:30616"/>
    </ligand>
</feature>
<feature type="binding site" evidence="1">
    <location>
        <position position="218"/>
    </location>
    <ligand>
        <name>ATP</name>
        <dbReference type="ChEBI" id="CHEBI:30616"/>
    </ligand>
</feature>
<feature type="binding site" evidence="1">
    <location>
        <position position="310"/>
    </location>
    <ligand>
        <name>DNA</name>
        <dbReference type="ChEBI" id="CHEBI:16991"/>
    </ligand>
</feature>
<feature type="binding site" evidence="1">
    <location>
        <position position="315"/>
    </location>
    <ligand>
        <name>DNA</name>
        <dbReference type="ChEBI" id="CHEBI:16991"/>
    </ligand>
</feature>
<sequence length="342" mass="38373">MENRMVTPFDVEDDREQYSLRPTTLKEYIGQKKVKANLDIFIKAAKKRSESLDHVLFYGPPGLGKTTLANIIANEMTGNLKVTSGPAIEKAGDLAAILTSLTDYDVLFIDEIHRLNRSIEEILYPAMEDYALDIVIGKGAAAKSIRLDLPKFTLIGATTRVGLLTSPLRDRFGMLCAMEFYTDEELMEIVVRSAAILNVNICREAAFEIGKRSRGTPRIANRLLKRVRDYCDVKHDGDIDLQGAKAALDLLEVDKEGLDKIDNKILEAIIFNFKGGPVGLETLAYFIGEELDTIEDVYEPYLIQKGFIMRTPRGRVASEKAYNHFGVTKKEEKDNQVSIFNK</sequence>
<protein>
    <recommendedName>
        <fullName evidence="1">Holliday junction branch migration complex subunit RuvB</fullName>
        <ecNumber evidence="1">3.6.4.-</ecNumber>
    </recommendedName>
</protein>
<evidence type="ECO:0000255" key="1">
    <source>
        <dbReference type="HAMAP-Rule" id="MF_00016"/>
    </source>
</evidence>
<comment type="function">
    <text evidence="1">The RuvA-RuvB-RuvC complex processes Holliday junction (HJ) DNA during genetic recombination and DNA repair, while the RuvA-RuvB complex plays an important role in the rescue of blocked DNA replication forks via replication fork reversal (RFR). RuvA specifically binds to HJ cruciform DNA, conferring on it an open structure. The RuvB hexamer acts as an ATP-dependent pump, pulling dsDNA into and through the RuvAB complex. RuvB forms 2 homohexamers on either side of HJ DNA bound by 1 or 2 RuvA tetramers; 4 subunits per hexamer contact DNA at a time. Coordinated motions by a converter formed by DNA-disengaged RuvB subunits stimulates ATP hydrolysis and nucleotide exchange. Immobilization of the converter enables RuvB to convert the ATP-contained energy into a lever motion, pulling 2 nucleotides of DNA out of the RuvA tetramer per ATP hydrolyzed, thus driving DNA branch migration. The RuvB motors rotate together with the DNA substrate, which together with the progressing nucleotide cycle form the mechanistic basis for DNA recombination by continuous HJ branch migration. Branch migration allows RuvC to scan DNA until it finds its consensus sequence, where it cleaves and resolves cruciform DNA.</text>
</comment>
<comment type="catalytic activity">
    <reaction evidence="1">
        <text>ATP + H2O = ADP + phosphate + H(+)</text>
        <dbReference type="Rhea" id="RHEA:13065"/>
        <dbReference type="ChEBI" id="CHEBI:15377"/>
        <dbReference type="ChEBI" id="CHEBI:15378"/>
        <dbReference type="ChEBI" id="CHEBI:30616"/>
        <dbReference type="ChEBI" id="CHEBI:43474"/>
        <dbReference type="ChEBI" id="CHEBI:456216"/>
    </reaction>
</comment>
<comment type="subunit">
    <text evidence="1">Homohexamer. Forms an RuvA(8)-RuvB(12)-Holliday junction (HJ) complex. HJ DNA is sandwiched between 2 RuvA tetramers; dsDNA enters through RuvA and exits via RuvB. An RuvB hexamer assembles on each DNA strand where it exits the tetramer. Each RuvB hexamer is contacted by two RuvA subunits (via domain III) on 2 adjacent RuvB subunits; this complex drives branch migration. In the full resolvosome a probable DNA-RuvA(4)-RuvB(12)-RuvC(2) complex forms which resolves the HJ.</text>
</comment>
<comment type="subcellular location">
    <subcellularLocation>
        <location evidence="1">Cytoplasm</location>
    </subcellularLocation>
</comment>
<comment type="domain">
    <text evidence="1">Has 3 domains, the large (RuvB-L) and small ATPase (RuvB-S) domains and the C-terminal head (RuvB-H) domain. The head domain binds DNA, while the ATPase domains jointly bind ATP, ADP or are empty depending on the state of the subunit in the translocation cycle. During a single DNA translocation step the structure of each domain remains the same, but their relative positions change.</text>
</comment>
<comment type="similarity">
    <text evidence="1">Belongs to the RuvB family.</text>
</comment>
<keyword id="KW-0067">ATP-binding</keyword>
<keyword id="KW-0963">Cytoplasm</keyword>
<keyword id="KW-0227">DNA damage</keyword>
<keyword id="KW-0233">DNA recombination</keyword>
<keyword id="KW-0234">DNA repair</keyword>
<keyword id="KW-0238">DNA-binding</keyword>
<keyword id="KW-0378">Hydrolase</keyword>
<keyword id="KW-0547">Nucleotide-binding</keyword>
<name>RUVB_CLOBJ</name>
<proteinExistence type="inferred from homology"/>